<comment type="function">
    <text evidence="1">Formation of pseudouridine at positions 38, 39 and 40 in the anticodon stem and loop of transfer RNAs.</text>
</comment>
<comment type="catalytic activity">
    <reaction evidence="1">
        <text>uridine(38/39/40) in tRNA = pseudouridine(38/39/40) in tRNA</text>
        <dbReference type="Rhea" id="RHEA:22376"/>
        <dbReference type="Rhea" id="RHEA-COMP:10085"/>
        <dbReference type="Rhea" id="RHEA-COMP:10087"/>
        <dbReference type="ChEBI" id="CHEBI:65314"/>
        <dbReference type="ChEBI" id="CHEBI:65315"/>
        <dbReference type="EC" id="5.4.99.12"/>
    </reaction>
</comment>
<comment type="subunit">
    <text evidence="1">Homodimer.</text>
</comment>
<comment type="similarity">
    <text evidence="1">Belongs to the tRNA pseudouridine synthase TruA family.</text>
</comment>
<organism>
    <name type="scientific">Mycoplasma mycoides subsp. mycoides SC (strain CCUG 32753 / NCTC 10114 / PG1)</name>
    <dbReference type="NCBI Taxonomy" id="272632"/>
    <lineage>
        <taxon>Bacteria</taxon>
        <taxon>Bacillati</taxon>
        <taxon>Mycoplasmatota</taxon>
        <taxon>Mollicutes</taxon>
        <taxon>Mycoplasmataceae</taxon>
        <taxon>Mycoplasma</taxon>
    </lineage>
</organism>
<reference key="1">
    <citation type="journal article" date="2004" name="Genome Res.">
        <title>The genome sequence of Mycoplasma mycoides subsp. mycoides SC type strain PG1T, the causative agent of contagious bovine pleuropneumonia (CBPP).</title>
        <authorList>
            <person name="Westberg J."/>
            <person name="Persson A."/>
            <person name="Holmberg A."/>
            <person name="Goesmann A."/>
            <person name="Lundeberg J."/>
            <person name="Johansson K.-E."/>
            <person name="Pettersson B."/>
            <person name="Uhlen M."/>
        </authorList>
    </citation>
    <scope>NUCLEOTIDE SEQUENCE [LARGE SCALE GENOMIC DNA]</scope>
    <source>
        <strain>CCUG 32753 / NCTC 10114 / PG1</strain>
    </source>
</reference>
<sequence>MKTGILLSLCYDGSNYHGWINQTNAISIQTTLNKAIKKVIKTGQFKTIGASKTDTNVHALDQKVLLIIYFTPILEKFIKAINKALPSDIKILDAKFVDPNFNIREVEYKIYHYYINDHQFDIFTNRYEYFWKHQKIDIIKLQEIFNLFIGEHEFKLFSGLKENEWNQYQTKRTIDDIKVLRINNKVVIQFKASGFIRYQIRIIIANCLNAYLNHKISTTKLVEMLQGIGKKTPFIIDAKGLVLQKIQFNKN</sequence>
<protein>
    <recommendedName>
        <fullName evidence="1">tRNA pseudouridine synthase A</fullName>
        <ecNumber evidence="1">5.4.99.12</ecNumber>
    </recommendedName>
    <alternativeName>
        <fullName evidence="1">tRNA pseudouridine(38-40) synthase</fullName>
    </alternativeName>
    <alternativeName>
        <fullName evidence="1">tRNA pseudouridylate synthase I</fullName>
    </alternativeName>
    <alternativeName>
        <fullName evidence="1">tRNA-uridine isomerase I</fullName>
    </alternativeName>
</protein>
<gene>
    <name evidence="1" type="primary">truA</name>
    <name type="ordered locus">MSC_0715</name>
</gene>
<name>TRUA_MYCMS</name>
<accession>Q6MSQ4</accession>
<proteinExistence type="inferred from homology"/>
<dbReference type="EC" id="5.4.99.12" evidence="1"/>
<dbReference type="EMBL" id="BX293980">
    <property type="protein sequence ID" value="CAE77334.1"/>
    <property type="molecule type" value="Genomic_DNA"/>
</dbReference>
<dbReference type="RefSeq" id="NP_975692.1">
    <property type="nucleotide sequence ID" value="NC_005364.2"/>
</dbReference>
<dbReference type="RefSeq" id="WP_011166885.1">
    <property type="nucleotide sequence ID" value="NC_005364.2"/>
</dbReference>
<dbReference type="SMR" id="Q6MSQ4"/>
<dbReference type="STRING" id="272632.MSC_0715"/>
<dbReference type="KEGG" id="mmy:MSC_0715"/>
<dbReference type="PATRIC" id="fig|272632.4.peg.769"/>
<dbReference type="eggNOG" id="COG0101">
    <property type="taxonomic scope" value="Bacteria"/>
</dbReference>
<dbReference type="HOGENOM" id="CLU_014673_0_1_14"/>
<dbReference type="Proteomes" id="UP000001016">
    <property type="component" value="Chromosome"/>
</dbReference>
<dbReference type="GO" id="GO:0003723">
    <property type="term" value="F:RNA binding"/>
    <property type="evidence" value="ECO:0007669"/>
    <property type="project" value="InterPro"/>
</dbReference>
<dbReference type="GO" id="GO:0160147">
    <property type="term" value="F:tRNA pseudouridine(38-40) synthase activity"/>
    <property type="evidence" value="ECO:0007669"/>
    <property type="project" value="UniProtKB-EC"/>
</dbReference>
<dbReference type="GO" id="GO:0031119">
    <property type="term" value="P:tRNA pseudouridine synthesis"/>
    <property type="evidence" value="ECO:0007669"/>
    <property type="project" value="UniProtKB-UniRule"/>
</dbReference>
<dbReference type="CDD" id="cd02570">
    <property type="entry name" value="PseudoU_synth_EcTruA"/>
    <property type="match status" value="1"/>
</dbReference>
<dbReference type="Gene3D" id="3.30.70.660">
    <property type="entry name" value="Pseudouridine synthase I, catalytic domain, C-terminal subdomain"/>
    <property type="match status" value="1"/>
</dbReference>
<dbReference type="Gene3D" id="3.30.70.580">
    <property type="entry name" value="Pseudouridine synthase I, catalytic domain, N-terminal subdomain"/>
    <property type="match status" value="1"/>
</dbReference>
<dbReference type="HAMAP" id="MF_00171">
    <property type="entry name" value="TruA"/>
    <property type="match status" value="1"/>
</dbReference>
<dbReference type="InterPro" id="IPR020103">
    <property type="entry name" value="PsdUridine_synth_cat_dom_sf"/>
</dbReference>
<dbReference type="InterPro" id="IPR001406">
    <property type="entry name" value="PsdUridine_synth_TruA"/>
</dbReference>
<dbReference type="InterPro" id="IPR020097">
    <property type="entry name" value="PsdUridine_synth_TruA_a/b_dom"/>
</dbReference>
<dbReference type="InterPro" id="IPR020095">
    <property type="entry name" value="PsdUridine_synth_TruA_C"/>
</dbReference>
<dbReference type="InterPro" id="IPR020094">
    <property type="entry name" value="TruA/RsuA/RluB/E/F_N"/>
</dbReference>
<dbReference type="PANTHER" id="PTHR11142">
    <property type="entry name" value="PSEUDOURIDYLATE SYNTHASE"/>
    <property type="match status" value="1"/>
</dbReference>
<dbReference type="PANTHER" id="PTHR11142:SF0">
    <property type="entry name" value="TRNA PSEUDOURIDINE SYNTHASE-LIKE 1"/>
    <property type="match status" value="1"/>
</dbReference>
<dbReference type="Pfam" id="PF01416">
    <property type="entry name" value="PseudoU_synth_1"/>
    <property type="match status" value="1"/>
</dbReference>
<dbReference type="PIRSF" id="PIRSF001430">
    <property type="entry name" value="tRNA_psdUrid_synth"/>
    <property type="match status" value="1"/>
</dbReference>
<dbReference type="SUPFAM" id="SSF55120">
    <property type="entry name" value="Pseudouridine synthase"/>
    <property type="match status" value="1"/>
</dbReference>
<keyword id="KW-0413">Isomerase</keyword>
<keyword id="KW-1185">Reference proteome</keyword>
<keyword id="KW-0819">tRNA processing</keyword>
<feature type="chain" id="PRO_0000057410" description="tRNA pseudouridine synthase A">
    <location>
        <begin position="1"/>
        <end position="251"/>
    </location>
</feature>
<feature type="active site" description="Nucleophile" evidence="1">
    <location>
        <position position="54"/>
    </location>
</feature>
<feature type="binding site" evidence="1">
    <location>
        <position position="111"/>
    </location>
    <ligand>
        <name>substrate</name>
    </ligand>
</feature>
<evidence type="ECO:0000255" key="1">
    <source>
        <dbReference type="HAMAP-Rule" id="MF_00171"/>
    </source>
</evidence>